<dbReference type="EMBL" id="KF552086">
    <property type="protein sequence ID" value="AHB18714.1"/>
    <property type="molecule type" value="Genomic_DNA"/>
</dbReference>
<dbReference type="GO" id="GO:0090729">
    <property type="term" value="F:toxin activity"/>
    <property type="evidence" value="ECO:0007669"/>
    <property type="project" value="UniProtKB-KW"/>
</dbReference>
<dbReference type="InterPro" id="IPR027582">
    <property type="entry name" value="Amanitin/phalloidin"/>
</dbReference>
<dbReference type="NCBIfam" id="TIGR04309">
    <property type="entry name" value="amanitin"/>
    <property type="match status" value="1"/>
</dbReference>
<comment type="function">
    <text evidence="4">Probable toxin that belongs to the MSDIN-like toxin family responsible for a large number of food poisoning cases and deaths (PubMed:24613547).</text>
</comment>
<comment type="PTM">
    <text evidence="1">Processed by the macrocyclase-peptidase enzyme POPB to yield a toxic cyclic heptapeptide (By similarity). POPB first removes 10 residues from the N-terminus (By similarity). Conformational trapping of the remaining peptide forces the enzyme to release this intermediate rather than proceed to macrocyclization (By similarity). The enzyme rebinds the remaining peptide in a different conformation and catalyzes macrocyclization of the N-terminal 7 residues (By similarity).</text>
</comment>
<comment type="similarity">
    <text evidence="3">Belongs to the MSDIN fungal toxin family.</text>
</comment>
<proteinExistence type="inferred from homology"/>
<sequence>MSDINATRVPAWLAECPCVGDDISHLLTRGEK</sequence>
<feature type="propeptide" id="PRO_0000443710" evidence="4">
    <location>
        <begin position="1"/>
        <end position="10"/>
    </location>
</feature>
<feature type="peptide" id="PRO_0000443711" description="Toxin MSD2" evidence="4">
    <location>
        <begin position="11"/>
        <end position="17"/>
    </location>
</feature>
<feature type="propeptide" id="PRO_0000443712" evidence="4">
    <location>
        <begin position="18"/>
        <end position="32"/>
    </location>
</feature>
<feature type="cross-link" description="Cyclopeptide (Ala-Pro)" evidence="4">
    <location>
        <begin position="11"/>
        <end position="17"/>
    </location>
</feature>
<evidence type="ECO:0000250" key="1">
    <source>
        <dbReference type="UniProtKB" id="A0A067SLB9"/>
    </source>
</evidence>
<evidence type="ECO:0000303" key="2">
    <source>
    </source>
</evidence>
<evidence type="ECO:0000305" key="3"/>
<evidence type="ECO:0000305" key="4">
    <source>
    </source>
</evidence>
<protein>
    <recommendedName>
        <fullName evidence="2">MSDIN-like toxin proprotein 2</fullName>
    </recommendedName>
    <component>
        <recommendedName>
            <fullName evidence="4">Toxin MSD2</fullName>
        </recommendedName>
    </component>
</protein>
<organism>
    <name type="scientific">Amanita rimosa</name>
    <dbReference type="NCBI Taxonomy" id="580330"/>
    <lineage>
        <taxon>Eukaryota</taxon>
        <taxon>Fungi</taxon>
        <taxon>Dikarya</taxon>
        <taxon>Basidiomycota</taxon>
        <taxon>Agaricomycotina</taxon>
        <taxon>Agaricomycetes</taxon>
        <taxon>Agaricomycetidae</taxon>
        <taxon>Agaricales</taxon>
        <taxon>Pluteineae</taxon>
        <taxon>Amanitaceae</taxon>
        <taxon>Amanita</taxon>
    </lineage>
</organism>
<reference key="1">
    <citation type="journal article" date="2014" name="Toxicon">
        <title>The molecular diversity of toxin gene families in lethal Amanita mushrooms.</title>
        <authorList>
            <person name="Li P."/>
            <person name="Deng W."/>
            <person name="Li T."/>
        </authorList>
    </citation>
    <scope>NUCLEOTIDE SEQUENCE [GENOMIC DNA]</scope>
    <scope>FUNCTION</scope>
</reference>
<keyword id="KW-0800">Toxin</keyword>
<accession>A0A023IWK5</accession>
<name>MSD2_AMARI</name>